<gene>
    <name evidence="8" type="primary">pfl9</name>
    <name evidence="11" type="ORF">SPAC186.01</name>
</gene>
<proteinExistence type="evidence at transcript level"/>
<organism>
    <name type="scientific">Schizosaccharomyces pombe (strain 972 / ATCC 24843)</name>
    <name type="common">Fission yeast</name>
    <dbReference type="NCBI Taxonomy" id="284812"/>
    <lineage>
        <taxon>Eukaryota</taxon>
        <taxon>Fungi</taxon>
        <taxon>Dikarya</taxon>
        <taxon>Ascomycota</taxon>
        <taxon>Taphrinomycotina</taxon>
        <taxon>Schizosaccharomycetes</taxon>
        <taxon>Schizosaccharomycetales</taxon>
        <taxon>Schizosaccharomycetaceae</taxon>
        <taxon>Schizosaccharomyces</taxon>
    </lineage>
</organism>
<feature type="signal peptide" evidence="2">
    <location>
        <begin position="1"/>
        <end position="21"/>
    </location>
</feature>
<feature type="chain" id="PRO_0000353815" description="Putative cell agglutination protein pfl9">
    <location>
        <begin position="22"/>
        <end position="326"/>
    </location>
</feature>
<feature type="repeat" description="1" evidence="10">
    <location>
        <begin position="103"/>
        <end position="137"/>
    </location>
</feature>
<feature type="repeat" description="2" evidence="10">
    <location>
        <begin position="138"/>
        <end position="175"/>
    </location>
</feature>
<feature type="domain" description="DIPSY" evidence="4">
    <location>
        <begin position="164"/>
        <end position="326"/>
    </location>
</feature>
<feature type="region of interest" description="2 X 36 AA approximate tandem repeats" evidence="10">
    <location>
        <begin position="103"/>
        <end position="175"/>
    </location>
</feature>
<feature type="glycosylation site" description="N-linked (GlcNAc...) asparagine" evidence="3">
    <location>
        <position position="25"/>
    </location>
</feature>
<sequence>MNVVKYIIFSFALAPLLLVNANTYNFTQIQKRSVNQAVLESSQDTNSVGGEASSTACPLFTTIYTNGITPGTTTIYPTSISTSGVSSNNIDETSVSSESIITSTITTTITSGSQLYTTTITGQNTPVDTVEVVIPTAGTFTTTLTSGSSYPVATTTVRTASGTQSGEVEVITPSCGCSPENSFHLKIDNDKISPSYVYMDPNAPVRTNGAGREGNMFASTNGDNEGLNLFYYDSTIQRVLTCDCQRPSYTVYIEDPIIGNGFSSAWNLIKNSDGIFTPVESRNNEPLHFHVDNNGRVWMTSQEYDTEVSSTDERNFRANDVTLQLY</sequence>
<name>PFL9_SCHPO</name>
<dbReference type="EMBL" id="CU329670">
    <property type="protein sequence ID" value="CAB75865.1"/>
    <property type="molecule type" value="Genomic_DNA"/>
</dbReference>
<dbReference type="PIR" id="T50128">
    <property type="entry name" value="T50128"/>
</dbReference>
<dbReference type="RefSeq" id="NP_595019.1">
    <property type="nucleotide sequence ID" value="NM_001020450.2"/>
</dbReference>
<dbReference type="BioGRID" id="278914">
    <property type="interactions" value="27"/>
</dbReference>
<dbReference type="STRING" id="284812.Q9P7Q2"/>
<dbReference type="GlyCosmos" id="Q9P7Q2">
    <property type="glycosylation" value="1 site, No reported glycans"/>
</dbReference>
<dbReference type="PaxDb" id="4896-SPAC186.01.1"/>
<dbReference type="EnsemblFungi" id="SPAC186.01.1">
    <property type="protein sequence ID" value="SPAC186.01.1:pep"/>
    <property type="gene ID" value="SPAC186.01"/>
</dbReference>
<dbReference type="GeneID" id="2542453"/>
<dbReference type="KEGG" id="spo:2542453"/>
<dbReference type="PomBase" id="SPAC186.01">
    <property type="gene designation" value="pfl9"/>
</dbReference>
<dbReference type="VEuPathDB" id="FungiDB:SPAC186.01"/>
<dbReference type="HOGENOM" id="CLU_774238_0_0_1"/>
<dbReference type="InParanoid" id="Q9P7Q2"/>
<dbReference type="PRO" id="PR:Q9P7Q2"/>
<dbReference type="Proteomes" id="UP000002485">
    <property type="component" value="Chromosome I"/>
</dbReference>
<dbReference type="GO" id="GO:0010339">
    <property type="term" value="C:external side of cell wall"/>
    <property type="evidence" value="ECO:0000304"/>
    <property type="project" value="PomBase"/>
</dbReference>
<dbReference type="GO" id="GO:0000128">
    <property type="term" value="P:flocculation"/>
    <property type="evidence" value="ECO:0000315"/>
    <property type="project" value="PomBase"/>
</dbReference>
<dbReference type="InterPro" id="IPR021746">
    <property type="entry name" value="DIPSY"/>
</dbReference>
<dbReference type="InterPro" id="IPR051905">
    <property type="entry name" value="S_pombe_Mam3/Map4"/>
</dbReference>
<dbReference type="PANTHER" id="PTHR31492">
    <property type="entry name" value="M CELL-TYPE AGGLUTINATION PROTEIN MAM3-RELATED"/>
    <property type="match status" value="1"/>
</dbReference>
<dbReference type="PANTHER" id="PTHR31492:SF14">
    <property type="entry name" value="M CELL-TYPE AGGLUTINATION PROTEIN MAM3-RELATED"/>
    <property type="match status" value="1"/>
</dbReference>
<dbReference type="Pfam" id="PF11763">
    <property type="entry name" value="DIPSY"/>
    <property type="match status" value="1"/>
</dbReference>
<dbReference type="PROSITE" id="PS51825">
    <property type="entry name" value="DIPSY"/>
    <property type="match status" value="1"/>
</dbReference>
<protein>
    <recommendedName>
        <fullName evidence="9">Putative cell agglutination protein pfl9</fullName>
    </recommendedName>
    <alternativeName>
        <fullName evidence="7">Adhesin pfl9</fullName>
    </alternativeName>
    <alternativeName>
        <fullName evidence="8">Pombe flocculin 9</fullName>
    </alternativeName>
</protein>
<accession>Q9P7Q2</accession>
<keyword id="KW-0325">Glycoprotein</keyword>
<keyword id="KW-1185">Reference proteome</keyword>
<keyword id="KW-0677">Repeat</keyword>
<keyword id="KW-0732">Signal</keyword>
<comment type="function">
    <text evidence="1 6">May be involved in agglutination during conjugation or other aspects of colony formation (By similarity). Induces flocculation when overexpressed (PubMed:23236291).</text>
</comment>
<comment type="subcellular location">
    <subcellularLocation>
        <location evidence="9">Cell surface</location>
    </subcellularLocation>
</comment>
<comment type="induction">
    <text evidence="5">Repressed by the srb8 and srb9 transcription factors.</text>
</comment>
<comment type="similarity">
    <text evidence="4">Belongs to the mam3/map4 family.</text>
</comment>
<reference key="1">
    <citation type="journal article" date="2002" name="Nature">
        <title>The genome sequence of Schizosaccharomyces pombe.</title>
        <authorList>
            <person name="Wood V."/>
            <person name="Gwilliam R."/>
            <person name="Rajandream M.A."/>
            <person name="Lyne M.H."/>
            <person name="Lyne R."/>
            <person name="Stewart A."/>
            <person name="Sgouros J.G."/>
            <person name="Peat N."/>
            <person name="Hayles J."/>
            <person name="Baker S.G."/>
            <person name="Basham D."/>
            <person name="Bowman S."/>
            <person name="Brooks K."/>
            <person name="Brown D."/>
            <person name="Brown S."/>
            <person name="Chillingworth T."/>
            <person name="Churcher C.M."/>
            <person name="Collins M."/>
            <person name="Connor R."/>
            <person name="Cronin A."/>
            <person name="Davis P."/>
            <person name="Feltwell T."/>
            <person name="Fraser A."/>
            <person name="Gentles S."/>
            <person name="Goble A."/>
            <person name="Hamlin N."/>
            <person name="Harris D.E."/>
            <person name="Hidalgo J."/>
            <person name="Hodgson G."/>
            <person name="Holroyd S."/>
            <person name="Hornsby T."/>
            <person name="Howarth S."/>
            <person name="Huckle E.J."/>
            <person name="Hunt S."/>
            <person name="Jagels K."/>
            <person name="James K.D."/>
            <person name="Jones L."/>
            <person name="Jones M."/>
            <person name="Leather S."/>
            <person name="McDonald S."/>
            <person name="McLean J."/>
            <person name="Mooney P."/>
            <person name="Moule S."/>
            <person name="Mungall K.L."/>
            <person name="Murphy L.D."/>
            <person name="Niblett D."/>
            <person name="Odell C."/>
            <person name="Oliver K."/>
            <person name="O'Neil S."/>
            <person name="Pearson D."/>
            <person name="Quail M.A."/>
            <person name="Rabbinowitsch E."/>
            <person name="Rutherford K.M."/>
            <person name="Rutter S."/>
            <person name="Saunders D."/>
            <person name="Seeger K."/>
            <person name="Sharp S."/>
            <person name="Skelton J."/>
            <person name="Simmonds M.N."/>
            <person name="Squares R."/>
            <person name="Squares S."/>
            <person name="Stevens K."/>
            <person name="Taylor K."/>
            <person name="Taylor R.G."/>
            <person name="Tivey A."/>
            <person name="Walsh S.V."/>
            <person name="Warren T."/>
            <person name="Whitehead S."/>
            <person name="Woodward J.R."/>
            <person name="Volckaert G."/>
            <person name="Aert R."/>
            <person name="Robben J."/>
            <person name="Grymonprez B."/>
            <person name="Weltjens I."/>
            <person name="Vanstreels E."/>
            <person name="Rieger M."/>
            <person name="Schaefer M."/>
            <person name="Mueller-Auer S."/>
            <person name="Gabel C."/>
            <person name="Fuchs M."/>
            <person name="Duesterhoeft A."/>
            <person name="Fritzc C."/>
            <person name="Holzer E."/>
            <person name="Moestl D."/>
            <person name="Hilbert H."/>
            <person name="Borzym K."/>
            <person name="Langer I."/>
            <person name="Beck A."/>
            <person name="Lehrach H."/>
            <person name="Reinhardt R."/>
            <person name="Pohl T.M."/>
            <person name="Eger P."/>
            <person name="Zimmermann W."/>
            <person name="Wedler H."/>
            <person name="Wambutt R."/>
            <person name="Purnelle B."/>
            <person name="Goffeau A."/>
            <person name="Cadieu E."/>
            <person name="Dreano S."/>
            <person name="Gloux S."/>
            <person name="Lelaure V."/>
            <person name="Mottier S."/>
            <person name="Galibert F."/>
            <person name="Aves S.J."/>
            <person name="Xiang Z."/>
            <person name="Hunt C."/>
            <person name="Moore K."/>
            <person name="Hurst S.M."/>
            <person name="Lucas M."/>
            <person name="Rochet M."/>
            <person name="Gaillardin C."/>
            <person name="Tallada V.A."/>
            <person name="Garzon A."/>
            <person name="Thode G."/>
            <person name="Daga R.R."/>
            <person name="Cruzado L."/>
            <person name="Jimenez J."/>
            <person name="Sanchez M."/>
            <person name="del Rey F."/>
            <person name="Benito J."/>
            <person name="Dominguez A."/>
            <person name="Revuelta J.L."/>
            <person name="Moreno S."/>
            <person name="Armstrong J."/>
            <person name="Forsburg S.L."/>
            <person name="Cerutti L."/>
            <person name="Lowe T."/>
            <person name="McCombie W.R."/>
            <person name="Paulsen I."/>
            <person name="Potashkin J."/>
            <person name="Shpakovski G.V."/>
            <person name="Ussery D."/>
            <person name="Barrell B.G."/>
            <person name="Nurse P."/>
        </authorList>
    </citation>
    <scope>NUCLEOTIDE SEQUENCE [LARGE SCALE GENOMIC DNA]</scope>
    <source>
        <strain>972 / ATCC 24843</strain>
    </source>
</reference>
<reference key="2">
    <citation type="journal article" date="2003" name="Proc. Natl. Acad. Sci. U.S.A.">
        <title>TRAP230/ARC240 and TRAP240/ARC250 Mediator subunits are functionally conserved through evolution.</title>
        <authorList>
            <person name="Samuelsen C.O."/>
            <person name="Baraznenok V."/>
            <person name="Khorosjutina O."/>
            <person name="Spaehr H."/>
            <person name="Kieselbach T."/>
            <person name="Holmberg S."/>
            <person name="Gustafsson C.M."/>
        </authorList>
    </citation>
    <scope>INDUCTION</scope>
</reference>
<reference key="3">
    <citation type="journal article" date="2008" name="Fungal Genet. Biol.">
        <title>Molecular phylogenetics of ascomycotal adhesins--a novel family of putative cell-surface adhesive proteins in fission yeasts.</title>
        <authorList>
            <person name="Linder T."/>
            <person name="Gustafsson C.M."/>
        </authorList>
    </citation>
    <scope>DOMAIN</scope>
    <scope>REPEATS</scope>
</reference>
<reference key="4">
    <citation type="journal article" date="2012" name="PLoS Genet.">
        <title>Deciphering the transcriptional-regulatory network of flocculation in Schizosaccharomyces pombe.</title>
        <authorList>
            <person name="Kwon E.J."/>
            <person name="Laderoute A."/>
            <person name="Chatfield-Reed K."/>
            <person name="Vachon L."/>
            <person name="Karagiannis J."/>
            <person name="Chua G."/>
        </authorList>
    </citation>
    <scope>FUNCTION</scope>
</reference>
<evidence type="ECO:0000250" key="1">
    <source>
        <dbReference type="UniProtKB" id="O74346"/>
    </source>
</evidence>
<evidence type="ECO:0000255" key="2"/>
<evidence type="ECO:0000255" key="3">
    <source>
        <dbReference type="PROSITE-ProRule" id="PRU00498"/>
    </source>
</evidence>
<evidence type="ECO:0000255" key="4">
    <source>
        <dbReference type="PROSITE-ProRule" id="PRU01169"/>
    </source>
</evidence>
<evidence type="ECO:0000269" key="5">
    <source>
    </source>
</evidence>
<evidence type="ECO:0000269" key="6">
    <source>
    </source>
</evidence>
<evidence type="ECO:0000303" key="7">
    <source>
    </source>
</evidence>
<evidence type="ECO:0000303" key="8">
    <source>
    </source>
</evidence>
<evidence type="ECO:0000305" key="9"/>
<evidence type="ECO:0000305" key="10">
    <source>
    </source>
</evidence>
<evidence type="ECO:0000312" key="11">
    <source>
        <dbReference type="PomBase" id="SPAC186.01"/>
    </source>
</evidence>